<sequence length="545" mass="63835">MPNKKILVTCALPYANGPLHIGHMLEHIQADIWVRYQRMKNNEVYFICADDAHGTAIMLKSKQLNINPEIMIAKIQQEHYQDCCDFNISYNNYHSTHSEENYELLNSIYTKLKKSGFIKSRFISQLYDAQNNIFLPDRFIIGTCPKCRAHNQNGDNCDQCGAIYTPLDLINPKSAISGKSPIIKKSKHLFFDLPQFTKSLYTWIHSGVLQEETLHKVKEWFKLGLKEWDISRNEPYFGFKIPNTSSKYFYVWMDAPIGYMGTFKNLCKKNKNILFEDFWSINSKVELYHFIGKDITYFHSLFWPAILESCQYRKPTGIFVHGHVTLNGSKISKSKNNFINVRTYLSHLNSDYLRYYYATKLSSKINDIDLNFNDFMLKVNADIINKILNLASRNSNFITQYNYGYLSNSLENSNLYDFFIDAQYLIGKLFQQREFSEAMRKIMQLADKANQYIDKQAPWHIVKQHGIHNKNIALCIFSMGIQLFRVLVIYLKPVLPILSQYSEKFLNTRLSWNNINIPLTNHKINKFDIIFHRINTNQISSIINK</sequence>
<dbReference type="EC" id="6.1.1.10" evidence="1"/>
<dbReference type="EMBL" id="BX248583">
    <property type="protein sequence ID" value="CAD83160.1"/>
    <property type="molecule type" value="Genomic_DNA"/>
</dbReference>
<dbReference type="SMR" id="Q7VRX4"/>
<dbReference type="STRING" id="203907.Bfl471"/>
<dbReference type="KEGG" id="bfl:Bfl471"/>
<dbReference type="eggNOG" id="COG0143">
    <property type="taxonomic scope" value="Bacteria"/>
</dbReference>
<dbReference type="HOGENOM" id="CLU_009710_7_0_6"/>
<dbReference type="OrthoDB" id="9810191at2"/>
<dbReference type="Proteomes" id="UP000002192">
    <property type="component" value="Chromosome"/>
</dbReference>
<dbReference type="GO" id="GO:0005829">
    <property type="term" value="C:cytosol"/>
    <property type="evidence" value="ECO:0007669"/>
    <property type="project" value="TreeGrafter"/>
</dbReference>
<dbReference type="GO" id="GO:0005524">
    <property type="term" value="F:ATP binding"/>
    <property type="evidence" value="ECO:0007669"/>
    <property type="project" value="UniProtKB-UniRule"/>
</dbReference>
<dbReference type="GO" id="GO:0046872">
    <property type="term" value="F:metal ion binding"/>
    <property type="evidence" value="ECO:0007669"/>
    <property type="project" value="UniProtKB-KW"/>
</dbReference>
<dbReference type="GO" id="GO:0004825">
    <property type="term" value="F:methionine-tRNA ligase activity"/>
    <property type="evidence" value="ECO:0007669"/>
    <property type="project" value="UniProtKB-UniRule"/>
</dbReference>
<dbReference type="GO" id="GO:0006431">
    <property type="term" value="P:methionyl-tRNA aminoacylation"/>
    <property type="evidence" value="ECO:0007669"/>
    <property type="project" value="UniProtKB-UniRule"/>
</dbReference>
<dbReference type="FunFam" id="2.20.28.20:FF:000001">
    <property type="entry name" value="Methionine--tRNA ligase"/>
    <property type="match status" value="1"/>
</dbReference>
<dbReference type="Gene3D" id="3.40.50.620">
    <property type="entry name" value="HUPs"/>
    <property type="match status" value="1"/>
</dbReference>
<dbReference type="Gene3D" id="1.10.730.10">
    <property type="entry name" value="Isoleucyl-tRNA Synthetase, Domain 1"/>
    <property type="match status" value="1"/>
</dbReference>
<dbReference type="Gene3D" id="2.20.28.20">
    <property type="entry name" value="Methionyl-tRNA synthetase, Zn-domain"/>
    <property type="match status" value="1"/>
</dbReference>
<dbReference type="HAMAP" id="MF_00098">
    <property type="entry name" value="Met_tRNA_synth_type1"/>
    <property type="match status" value="1"/>
</dbReference>
<dbReference type="InterPro" id="IPR001412">
    <property type="entry name" value="aa-tRNA-synth_I_CS"/>
</dbReference>
<dbReference type="InterPro" id="IPR023458">
    <property type="entry name" value="Met-tRNA_ligase_1"/>
</dbReference>
<dbReference type="InterPro" id="IPR014758">
    <property type="entry name" value="Met-tRNA_synth"/>
</dbReference>
<dbReference type="InterPro" id="IPR015413">
    <property type="entry name" value="Methionyl/Leucyl_tRNA_Synth"/>
</dbReference>
<dbReference type="InterPro" id="IPR033911">
    <property type="entry name" value="MetRS_core"/>
</dbReference>
<dbReference type="InterPro" id="IPR029038">
    <property type="entry name" value="MetRS_Zn"/>
</dbReference>
<dbReference type="InterPro" id="IPR014729">
    <property type="entry name" value="Rossmann-like_a/b/a_fold"/>
</dbReference>
<dbReference type="InterPro" id="IPR009080">
    <property type="entry name" value="tRNAsynth_Ia_anticodon-bd"/>
</dbReference>
<dbReference type="NCBIfam" id="TIGR00398">
    <property type="entry name" value="metG"/>
    <property type="match status" value="1"/>
</dbReference>
<dbReference type="NCBIfam" id="NF001100">
    <property type="entry name" value="PRK00133.1"/>
    <property type="match status" value="1"/>
</dbReference>
<dbReference type="PANTHER" id="PTHR45765">
    <property type="entry name" value="METHIONINE--TRNA LIGASE"/>
    <property type="match status" value="1"/>
</dbReference>
<dbReference type="PANTHER" id="PTHR45765:SF1">
    <property type="entry name" value="METHIONINE--TRNA LIGASE, CYTOPLASMIC"/>
    <property type="match status" value="1"/>
</dbReference>
<dbReference type="Pfam" id="PF09334">
    <property type="entry name" value="tRNA-synt_1g"/>
    <property type="match status" value="1"/>
</dbReference>
<dbReference type="PRINTS" id="PR01041">
    <property type="entry name" value="TRNASYNTHMET"/>
</dbReference>
<dbReference type="SUPFAM" id="SSF47323">
    <property type="entry name" value="Anticodon-binding domain of a subclass of class I aminoacyl-tRNA synthetases"/>
    <property type="match status" value="1"/>
</dbReference>
<dbReference type="SUPFAM" id="SSF57770">
    <property type="entry name" value="Methionyl-tRNA synthetase (MetRS), Zn-domain"/>
    <property type="match status" value="1"/>
</dbReference>
<dbReference type="SUPFAM" id="SSF52374">
    <property type="entry name" value="Nucleotidylyl transferase"/>
    <property type="match status" value="1"/>
</dbReference>
<dbReference type="PROSITE" id="PS00178">
    <property type="entry name" value="AA_TRNA_LIGASE_I"/>
    <property type="match status" value="1"/>
</dbReference>
<proteinExistence type="inferred from homology"/>
<evidence type="ECO:0000255" key="1">
    <source>
        <dbReference type="HAMAP-Rule" id="MF_00098"/>
    </source>
</evidence>
<keyword id="KW-0030">Aminoacyl-tRNA synthetase</keyword>
<keyword id="KW-0067">ATP-binding</keyword>
<keyword id="KW-0963">Cytoplasm</keyword>
<keyword id="KW-0436">Ligase</keyword>
<keyword id="KW-0479">Metal-binding</keyword>
<keyword id="KW-0547">Nucleotide-binding</keyword>
<keyword id="KW-0648">Protein biosynthesis</keyword>
<keyword id="KW-1185">Reference proteome</keyword>
<keyword id="KW-0862">Zinc</keyword>
<accession>Q7VRX4</accession>
<reference key="1">
    <citation type="journal article" date="2003" name="Proc. Natl. Acad. Sci. U.S.A.">
        <title>The genome sequence of Blochmannia floridanus: comparative analysis of reduced genomes.</title>
        <authorList>
            <person name="Gil R."/>
            <person name="Silva F.J."/>
            <person name="Zientz E."/>
            <person name="Delmotte F."/>
            <person name="Gonzalez-Candelas F."/>
            <person name="Latorre A."/>
            <person name="Rausell C."/>
            <person name="Kamerbeek J."/>
            <person name="Gadau J."/>
            <person name="Hoelldobler B."/>
            <person name="van Ham R.C.H.J."/>
            <person name="Gross R."/>
            <person name="Moya A."/>
        </authorList>
    </citation>
    <scope>NUCLEOTIDE SEQUENCE [LARGE SCALE GENOMIC DNA]</scope>
</reference>
<feature type="chain" id="PRO_0000139116" description="Methionine--tRNA ligase">
    <location>
        <begin position="1"/>
        <end position="545"/>
    </location>
</feature>
<feature type="short sequence motif" description="'HIGH' region">
    <location>
        <begin position="13"/>
        <end position="23"/>
    </location>
</feature>
<feature type="short sequence motif" description="'KMSKS' region">
    <location>
        <begin position="330"/>
        <end position="334"/>
    </location>
</feature>
<feature type="binding site" evidence="1">
    <location>
        <position position="144"/>
    </location>
    <ligand>
        <name>Zn(2+)</name>
        <dbReference type="ChEBI" id="CHEBI:29105"/>
    </ligand>
</feature>
<feature type="binding site" evidence="1">
    <location>
        <position position="147"/>
    </location>
    <ligand>
        <name>Zn(2+)</name>
        <dbReference type="ChEBI" id="CHEBI:29105"/>
    </ligand>
</feature>
<feature type="binding site" evidence="1">
    <location>
        <position position="157"/>
    </location>
    <ligand>
        <name>Zn(2+)</name>
        <dbReference type="ChEBI" id="CHEBI:29105"/>
    </ligand>
</feature>
<feature type="binding site" evidence="1">
    <location>
        <position position="160"/>
    </location>
    <ligand>
        <name>Zn(2+)</name>
        <dbReference type="ChEBI" id="CHEBI:29105"/>
    </ligand>
</feature>
<feature type="binding site" evidence="1">
    <location>
        <position position="333"/>
    </location>
    <ligand>
        <name>ATP</name>
        <dbReference type="ChEBI" id="CHEBI:30616"/>
    </ligand>
</feature>
<name>SYM_BLOFL</name>
<protein>
    <recommendedName>
        <fullName evidence="1">Methionine--tRNA ligase</fullName>
        <ecNumber evidence="1">6.1.1.10</ecNumber>
    </recommendedName>
    <alternativeName>
        <fullName evidence="1">Methionyl-tRNA synthetase</fullName>
        <shortName evidence="1">MetRS</shortName>
    </alternativeName>
</protein>
<comment type="function">
    <text evidence="1">Is required not only for elongation of protein synthesis but also for the initiation of all mRNA translation through initiator tRNA(fMet) aminoacylation.</text>
</comment>
<comment type="catalytic activity">
    <reaction evidence="1">
        <text>tRNA(Met) + L-methionine + ATP = L-methionyl-tRNA(Met) + AMP + diphosphate</text>
        <dbReference type="Rhea" id="RHEA:13481"/>
        <dbReference type="Rhea" id="RHEA-COMP:9667"/>
        <dbReference type="Rhea" id="RHEA-COMP:9698"/>
        <dbReference type="ChEBI" id="CHEBI:30616"/>
        <dbReference type="ChEBI" id="CHEBI:33019"/>
        <dbReference type="ChEBI" id="CHEBI:57844"/>
        <dbReference type="ChEBI" id="CHEBI:78442"/>
        <dbReference type="ChEBI" id="CHEBI:78530"/>
        <dbReference type="ChEBI" id="CHEBI:456215"/>
        <dbReference type="EC" id="6.1.1.10"/>
    </reaction>
</comment>
<comment type="cofactor">
    <cofactor evidence="1">
        <name>Zn(2+)</name>
        <dbReference type="ChEBI" id="CHEBI:29105"/>
    </cofactor>
    <text evidence="1">Binds 1 zinc ion per subunit.</text>
</comment>
<comment type="subunit">
    <text evidence="1">Monomer.</text>
</comment>
<comment type="subcellular location">
    <subcellularLocation>
        <location evidence="1">Cytoplasm</location>
    </subcellularLocation>
</comment>
<comment type="similarity">
    <text evidence="1">Belongs to the class-I aminoacyl-tRNA synthetase family. MetG type 1 subfamily.</text>
</comment>
<organism>
    <name type="scientific">Blochmanniella floridana</name>
    <dbReference type="NCBI Taxonomy" id="203907"/>
    <lineage>
        <taxon>Bacteria</taxon>
        <taxon>Pseudomonadati</taxon>
        <taxon>Pseudomonadota</taxon>
        <taxon>Gammaproteobacteria</taxon>
        <taxon>Enterobacterales</taxon>
        <taxon>Enterobacteriaceae</taxon>
        <taxon>ant endosymbionts</taxon>
        <taxon>Candidatus Blochmanniella</taxon>
    </lineage>
</organism>
<gene>
    <name evidence="1" type="primary">metG</name>
    <name type="ordered locus">Bfl471</name>
</gene>